<organism>
    <name type="scientific">Glycine max</name>
    <name type="common">Soybean</name>
    <name type="synonym">Glycine hispida</name>
    <dbReference type="NCBI Taxonomy" id="3847"/>
    <lineage>
        <taxon>Eukaryota</taxon>
        <taxon>Viridiplantae</taxon>
        <taxon>Streptophyta</taxon>
        <taxon>Embryophyta</taxon>
        <taxon>Tracheophyta</taxon>
        <taxon>Spermatophyta</taxon>
        <taxon>Magnoliopsida</taxon>
        <taxon>eudicotyledons</taxon>
        <taxon>Gunneridae</taxon>
        <taxon>Pentapetalae</taxon>
        <taxon>rosids</taxon>
        <taxon>fabids</taxon>
        <taxon>Fabales</taxon>
        <taxon>Fabaceae</taxon>
        <taxon>Papilionoideae</taxon>
        <taxon>50 kb inversion clade</taxon>
        <taxon>NPAAA clade</taxon>
        <taxon>indigoferoid/millettioid clade</taxon>
        <taxon>Phaseoleae</taxon>
        <taxon>Glycine</taxon>
        <taxon>Glycine subgen. Soja</taxon>
    </lineage>
</organism>
<reference key="1">
    <citation type="submission" date="1996-09" db="EMBL/GenBank/DDBJ databases">
        <authorList>
            <person name="Ryu G.R."/>
            <person name="Yoo C.M."/>
            <person name="Jeong H.J."/>
            <person name="Hong J.C."/>
        </authorList>
    </citation>
    <scope>NUCLEOTIDE SEQUENCE [MRNA]</scope>
    <source>
        <strain>cv. Williams</strain>
    </source>
</reference>
<evidence type="ECO:0000305" key="1"/>
<feature type="chain" id="PRO_0000058701" description="14-3-3-like protein A">
    <location>
        <begin position="1"/>
        <end position="257"/>
    </location>
</feature>
<comment type="similarity">
    <text evidence="1">Belongs to the 14-3-3 family.</text>
</comment>
<proteinExistence type="evidence at transcript level"/>
<sequence>MSDSSREENVYMAKLADEAERYEEMVEFMEKVAKTVEVEELTVEERNLLSVAYKNVIGARRASWRIISSIEQKEESRGNEDHVAIIKEYRGKIEAELSKICDGILNLLESNLIPSAASPESKVFYLKMKGDYHRYLAEFKTGAERKEAAESTLLAYKSAQDIALADLAPTHPIRLGLALNFSVFYYEILNSPDRACNLAKQAFDEAISELDTLGEESYKDSTLIMQLLRDNLTLWTSDITDIAGDEIKETSKQQPGE</sequence>
<accession>Q96450</accession>
<protein>
    <recommendedName>
        <fullName>14-3-3-like protein A</fullName>
    </recommendedName>
    <alternativeName>
        <fullName>SGF14A</fullName>
    </alternativeName>
</protein>
<name>1433A_SOYBN</name>
<keyword id="KW-1185">Reference proteome</keyword>
<gene>
    <name type="primary">GF14A</name>
</gene>
<dbReference type="EMBL" id="U70533">
    <property type="protein sequence ID" value="AAB09580.1"/>
    <property type="molecule type" value="mRNA"/>
</dbReference>
<dbReference type="PIR" id="T08840">
    <property type="entry name" value="T08840"/>
</dbReference>
<dbReference type="SMR" id="Q96450"/>
<dbReference type="FunCoup" id="Q96450">
    <property type="interactions" value="5630"/>
</dbReference>
<dbReference type="STRING" id="3847.Q96450"/>
<dbReference type="PaxDb" id="3847-GLYMA18G53610.1"/>
<dbReference type="ProMEX" id="Q96450"/>
<dbReference type="eggNOG" id="KOG0841">
    <property type="taxonomic scope" value="Eukaryota"/>
</dbReference>
<dbReference type="InParanoid" id="Q96450"/>
<dbReference type="Proteomes" id="UP000008827">
    <property type="component" value="Unplaced"/>
</dbReference>
<dbReference type="GO" id="GO:0005737">
    <property type="term" value="C:cytoplasm"/>
    <property type="evidence" value="ECO:0000318"/>
    <property type="project" value="GO_Central"/>
</dbReference>
<dbReference type="GO" id="GO:0008104">
    <property type="term" value="P:protein localization"/>
    <property type="evidence" value="ECO:0000318"/>
    <property type="project" value="GO_Central"/>
</dbReference>
<dbReference type="GO" id="GO:0007165">
    <property type="term" value="P:signal transduction"/>
    <property type="evidence" value="ECO:0000318"/>
    <property type="project" value="GO_Central"/>
</dbReference>
<dbReference type="FunFam" id="1.20.190.20:FF:000002">
    <property type="entry name" value="14-3-3 protein epsilon"/>
    <property type="match status" value="1"/>
</dbReference>
<dbReference type="Gene3D" id="1.20.190.20">
    <property type="entry name" value="14-3-3 domain"/>
    <property type="match status" value="1"/>
</dbReference>
<dbReference type="InterPro" id="IPR000308">
    <property type="entry name" value="14-3-3"/>
</dbReference>
<dbReference type="InterPro" id="IPR023409">
    <property type="entry name" value="14-3-3_CS"/>
</dbReference>
<dbReference type="InterPro" id="IPR036815">
    <property type="entry name" value="14-3-3_dom_sf"/>
</dbReference>
<dbReference type="InterPro" id="IPR023410">
    <property type="entry name" value="14-3-3_domain"/>
</dbReference>
<dbReference type="PANTHER" id="PTHR18860">
    <property type="entry name" value="14-3-3 PROTEIN"/>
    <property type="match status" value="1"/>
</dbReference>
<dbReference type="Pfam" id="PF00244">
    <property type="entry name" value="14-3-3"/>
    <property type="match status" value="1"/>
</dbReference>
<dbReference type="PIRSF" id="PIRSF000868">
    <property type="entry name" value="14-3-3"/>
    <property type="match status" value="1"/>
</dbReference>
<dbReference type="PRINTS" id="PR00305">
    <property type="entry name" value="1433ZETA"/>
</dbReference>
<dbReference type="SMART" id="SM00101">
    <property type="entry name" value="14_3_3"/>
    <property type="match status" value="1"/>
</dbReference>
<dbReference type="SUPFAM" id="SSF48445">
    <property type="entry name" value="14-3-3 protein"/>
    <property type="match status" value="1"/>
</dbReference>
<dbReference type="PROSITE" id="PS00796">
    <property type="entry name" value="1433_1"/>
    <property type="match status" value="1"/>
</dbReference>
<dbReference type="PROSITE" id="PS00797">
    <property type="entry name" value="1433_2"/>
    <property type="match status" value="1"/>
</dbReference>